<protein>
    <recommendedName>
        <fullName>Uncharacterized NTE family protein Mb2594</fullName>
    </recommendedName>
</protein>
<reference key="1">
    <citation type="journal article" date="2003" name="Proc. Natl. Acad. Sci. U.S.A.">
        <title>The complete genome sequence of Mycobacterium bovis.</title>
        <authorList>
            <person name="Garnier T."/>
            <person name="Eiglmeier K."/>
            <person name="Camus J.-C."/>
            <person name="Medina N."/>
            <person name="Mansoor H."/>
            <person name="Pryor M."/>
            <person name="Duthoy S."/>
            <person name="Grondin S."/>
            <person name="Lacroix C."/>
            <person name="Monsempe C."/>
            <person name="Simon S."/>
            <person name="Harris B."/>
            <person name="Atkin R."/>
            <person name="Doggett J."/>
            <person name="Mayes R."/>
            <person name="Keating L."/>
            <person name="Wheeler P.R."/>
            <person name="Parkhill J."/>
            <person name="Barrell B.G."/>
            <person name="Cole S.T."/>
            <person name="Gordon S.V."/>
            <person name="Hewinson R.G."/>
        </authorList>
    </citation>
    <scope>NUCLEOTIDE SEQUENCE [LARGE SCALE GENOMIC DNA]</scope>
    <source>
        <strain>ATCC BAA-935 / AF2122/97</strain>
    </source>
</reference>
<reference key="2">
    <citation type="journal article" date="2017" name="Genome Announc.">
        <title>Updated reference genome sequence and annotation of Mycobacterium bovis AF2122/97.</title>
        <authorList>
            <person name="Malone K.M."/>
            <person name="Farrell D."/>
            <person name="Stuber T.P."/>
            <person name="Schubert O.T."/>
            <person name="Aebersold R."/>
            <person name="Robbe-Austerman S."/>
            <person name="Gordon S.V."/>
        </authorList>
    </citation>
    <scope>NUCLEOTIDE SEQUENCE [LARGE SCALE GENOMIC DNA]</scope>
    <scope>GENOME REANNOTATION</scope>
    <source>
        <strain>ATCC BAA-935 / AF2122/97</strain>
    </source>
</reference>
<keyword id="KW-0378">Hydrolase</keyword>
<keyword id="KW-0442">Lipid degradation</keyword>
<keyword id="KW-0443">Lipid metabolism</keyword>
<keyword id="KW-1185">Reference proteome</keyword>
<gene>
    <name type="ordered locus">BQ2027_MB2594</name>
</gene>
<evidence type="ECO:0000255" key="1">
    <source>
        <dbReference type="PROSITE-ProRule" id="PRU01161"/>
    </source>
</evidence>
<evidence type="ECO:0000305" key="2"/>
<organism>
    <name type="scientific">Mycobacterium bovis (strain ATCC BAA-935 / AF2122/97)</name>
    <dbReference type="NCBI Taxonomy" id="233413"/>
    <lineage>
        <taxon>Bacteria</taxon>
        <taxon>Bacillati</taxon>
        <taxon>Actinomycetota</taxon>
        <taxon>Actinomycetes</taxon>
        <taxon>Mycobacteriales</taxon>
        <taxon>Mycobacteriaceae</taxon>
        <taxon>Mycobacterium</taxon>
        <taxon>Mycobacterium tuberculosis complex</taxon>
    </lineage>
</organism>
<name>Y2594_MYCBO</name>
<sequence length="583" mass="62124">MTTARRRPKRRGTDARTALRNVPILADIDDEQLERLATTVERRHVPANQWLFHAGEPADSIYIVDSGRFVAVAPEGHVFAEMASGDSIGDLGVIAGAARSAGVRALRDGVVWRIAAETFTDMLEATPLLQSAMLRAMARMLRQSRPAKTARRPRVIGVVSNGDTAAAPMVDAIATSLDSHGRTAVIAPPVETTSAVQEYDELVEAFSETLDRAERSNDWVLVVADRGAGDLWRHYVSAQSDRLVVLVDQRYPPDAVDSLATQRPVHLITCLAEPDPSWWDRLAPVSHHPANSDGFGALARRIAGRSLGLVMAGGGARGLAHFGVYQELTEAGVVIDRFGGTSSGAIASAAFALGMDAGDAIAAAREFIAGSDPLGDYTIPISALTRGGRVDRLVQGFFGNTLIEHLPRGFFSVSADMITGDQIIHRRGSVSGAVRASISIPGLIPPVHNGEQLLVDGGLLNNLPANVMCADTDGEVICVDLRRTFVPSKGFGLLPPIVTPPGLLRRLLTGTDNALPPLQETLLRAFDLAASTANLRELPRVAAIIEPDVSKIGVLNFKQIDAALEAGRMAARAALQAQPDLVR</sequence>
<proteinExistence type="inferred from homology"/>
<feature type="chain" id="PRO_0000172537" description="Uncharacterized NTE family protein Mb2594">
    <location>
        <begin position="1"/>
        <end position="583"/>
    </location>
</feature>
<feature type="domain" description="PNPLA" evidence="1">
    <location>
        <begin position="309"/>
        <end position="469"/>
    </location>
</feature>
<feature type="short sequence motif" description="GXGXXG" evidence="1">
    <location>
        <begin position="313"/>
        <end position="318"/>
    </location>
</feature>
<feature type="short sequence motif" description="GXSXG" evidence="1">
    <location>
        <begin position="340"/>
        <end position="344"/>
    </location>
</feature>
<feature type="short sequence motif" description="DGA/G" evidence="1">
    <location>
        <begin position="456"/>
        <end position="458"/>
    </location>
</feature>
<feature type="active site" description="Nucleophile" evidence="1">
    <location>
        <position position="342"/>
    </location>
</feature>
<feature type="active site" description="Proton acceptor" evidence="1">
    <location>
        <position position="456"/>
    </location>
</feature>
<feature type="binding site">
    <location>
        <begin position="24"/>
        <end position="140"/>
    </location>
    <ligand>
        <name>a nucleoside 3',5'-cyclic phosphate</name>
        <dbReference type="ChEBI" id="CHEBI:58464"/>
    </ligand>
</feature>
<dbReference type="EMBL" id="LT708304">
    <property type="protein sequence ID" value="SIU01212.1"/>
    <property type="molecule type" value="Genomic_DNA"/>
</dbReference>
<dbReference type="RefSeq" id="NP_856240.1">
    <property type="nucleotide sequence ID" value="NC_002945.3"/>
</dbReference>
<dbReference type="RefSeq" id="WP_003901427.1">
    <property type="nucleotide sequence ID" value="NC_002945.4"/>
</dbReference>
<dbReference type="SMR" id="P0A643"/>
<dbReference type="KEGG" id="mbo:BQ2027_MB2594"/>
<dbReference type="PATRIC" id="fig|233413.5.peg.2853"/>
<dbReference type="Proteomes" id="UP000001419">
    <property type="component" value="Chromosome"/>
</dbReference>
<dbReference type="GO" id="GO:0004622">
    <property type="term" value="F:lysophospholipase activity"/>
    <property type="evidence" value="ECO:0007669"/>
    <property type="project" value="InterPro"/>
</dbReference>
<dbReference type="GO" id="GO:0016042">
    <property type="term" value="P:lipid catabolic process"/>
    <property type="evidence" value="ECO:0007669"/>
    <property type="project" value="UniProtKB-KW"/>
</dbReference>
<dbReference type="GO" id="GO:0046470">
    <property type="term" value="P:phosphatidylcholine metabolic process"/>
    <property type="evidence" value="ECO:0007669"/>
    <property type="project" value="InterPro"/>
</dbReference>
<dbReference type="CDD" id="cd00038">
    <property type="entry name" value="CAP_ED"/>
    <property type="match status" value="1"/>
</dbReference>
<dbReference type="CDD" id="cd07205">
    <property type="entry name" value="Pat_PNPLA6_PNPLA7_NTE1_like"/>
    <property type="match status" value="1"/>
</dbReference>
<dbReference type="Gene3D" id="3.40.1090.10">
    <property type="entry name" value="Cytosolic phospholipase A2 catalytic domain"/>
    <property type="match status" value="2"/>
</dbReference>
<dbReference type="Gene3D" id="2.60.120.10">
    <property type="entry name" value="Jelly Rolls"/>
    <property type="match status" value="1"/>
</dbReference>
<dbReference type="InterPro" id="IPR016035">
    <property type="entry name" value="Acyl_Trfase/lysoPLipase"/>
</dbReference>
<dbReference type="InterPro" id="IPR000595">
    <property type="entry name" value="cNMP-bd_dom"/>
</dbReference>
<dbReference type="InterPro" id="IPR018490">
    <property type="entry name" value="cNMP-bd_dom_sf"/>
</dbReference>
<dbReference type="InterPro" id="IPR001423">
    <property type="entry name" value="LysoPLipase_patatin_CS"/>
</dbReference>
<dbReference type="InterPro" id="IPR050301">
    <property type="entry name" value="NTE"/>
</dbReference>
<dbReference type="InterPro" id="IPR002641">
    <property type="entry name" value="PNPLA_dom"/>
</dbReference>
<dbReference type="InterPro" id="IPR014710">
    <property type="entry name" value="RmlC-like_jellyroll"/>
</dbReference>
<dbReference type="PANTHER" id="PTHR14226:SF29">
    <property type="entry name" value="NEUROPATHY TARGET ESTERASE SWS"/>
    <property type="match status" value="1"/>
</dbReference>
<dbReference type="PANTHER" id="PTHR14226">
    <property type="entry name" value="NEUROPATHY TARGET ESTERASE/SWISS CHEESE D.MELANOGASTER"/>
    <property type="match status" value="1"/>
</dbReference>
<dbReference type="Pfam" id="PF00027">
    <property type="entry name" value="cNMP_binding"/>
    <property type="match status" value="1"/>
</dbReference>
<dbReference type="Pfam" id="PF01734">
    <property type="entry name" value="Patatin"/>
    <property type="match status" value="1"/>
</dbReference>
<dbReference type="SMART" id="SM00100">
    <property type="entry name" value="cNMP"/>
    <property type="match status" value="1"/>
</dbReference>
<dbReference type="SUPFAM" id="SSF51206">
    <property type="entry name" value="cAMP-binding domain-like"/>
    <property type="match status" value="1"/>
</dbReference>
<dbReference type="SUPFAM" id="SSF52151">
    <property type="entry name" value="FabD/lysophospholipase-like"/>
    <property type="match status" value="1"/>
</dbReference>
<dbReference type="PROSITE" id="PS50042">
    <property type="entry name" value="CNMP_BINDING_3"/>
    <property type="match status" value="1"/>
</dbReference>
<dbReference type="PROSITE" id="PS51635">
    <property type="entry name" value="PNPLA"/>
    <property type="match status" value="1"/>
</dbReference>
<dbReference type="PROSITE" id="PS01237">
    <property type="entry name" value="UPF0028"/>
    <property type="match status" value="1"/>
</dbReference>
<comment type="similarity">
    <text evidence="2">Belongs to the NTE family.</text>
</comment>
<accession>P0A643</accession>
<accession>A0A1R3Y1K7</accession>
<accession>Q50733</accession>
<accession>X2BLC0</accession>